<dbReference type="EC" id="1.97.1.14" evidence="7"/>
<dbReference type="EMBL" id="AB534554">
    <property type="protein sequence ID" value="BAJ83592.1"/>
    <property type="molecule type" value="Genomic_DNA"/>
</dbReference>
<dbReference type="EMBL" id="BASE01000031">
    <property type="protein sequence ID" value="GAM13406.1"/>
    <property type="molecule type" value="Genomic_DNA"/>
</dbReference>
<dbReference type="RefSeq" id="WP_041965252.1">
    <property type="nucleotide sequence ID" value="NZ_BASE01000031.1"/>
</dbReference>
<dbReference type="STRING" id="1321606.SAMD00020551_1550"/>
<dbReference type="KEGG" id="ag:BAJ83592"/>
<dbReference type="OrthoDB" id="9779457at2"/>
<dbReference type="BRENDA" id="1.97.1.9">
    <property type="organism ID" value="13649"/>
</dbReference>
<dbReference type="Proteomes" id="UP000031014">
    <property type="component" value="Unassembled WGS sequence"/>
</dbReference>
<dbReference type="GO" id="GO:0005576">
    <property type="term" value="C:extracellular region"/>
    <property type="evidence" value="ECO:0007669"/>
    <property type="project" value="UniProtKB-SubCell"/>
</dbReference>
<dbReference type="GO" id="GO:0051539">
    <property type="term" value="F:4 iron, 4 sulfur cluster binding"/>
    <property type="evidence" value="ECO:0007669"/>
    <property type="project" value="UniProtKB-KW"/>
</dbReference>
<dbReference type="GO" id="GO:0046872">
    <property type="term" value="F:metal ion binding"/>
    <property type="evidence" value="ECO:0007669"/>
    <property type="project" value="UniProtKB-KW"/>
</dbReference>
<dbReference type="GO" id="GO:0016491">
    <property type="term" value="F:oxidoreductase activity"/>
    <property type="evidence" value="ECO:0007669"/>
    <property type="project" value="UniProtKB-KW"/>
</dbReference>
<dbReference type="CDD" id="cd10551">
    <property type="entry name" value="PsrB"/>
    <property type="match status" value="1"/>
</dbReference>
<dbReference type="Gene3D" id="3.30.70.20">
    <property type="match status" value="2"/>
</dbReference>
<dbReference type="InterPro" id="IPR017896">
    <property type="entry name" value="4Fe4S_Fe-S-bd"/>
</dbReference>
<dbReference type="InterPro" id="IPR017900">
    <property type="entry name" value="4Fe4S_Fe_S_CS"/>
</dbReference>
<dbReference type="InterPro" id="IPR050954">
    <property type="entry name" value="ET_IronSulfur_Cluster-Binding"/>
</dbReference>
<dbReference type="InterPro" id="IPR006311">
    <property type="entry name" value="TAT_signal"/>
</dbReference>
<dbReference type="PANTHER" id="PTHR43177">
    <property type="entry name" value="PROTEIN NRFC"/>
    <property type="match status" value="1"/>
</dbReference>
<dbReference type="PANTHER" id="PTHR43177:SF3">
    <property type="entry name" value="PROTEIN NRFC HOMOLOG"/>
    <property type="match status" value="1"/>
</dbReference>
<dbReference type="Pfam" id="PF13247">
    <property type="entry name" value="Fer4_11"/>
    <property type="match status" value="2"/>
</dbReference>
<dbReference type="SUPFAM" id="SSF54862">
    <property type="entry name" value="4Fe-4S ferredoxins"/>
    <property type="match status" value="1"/>
</dbReference>
<dbReference type="PROSITE" id="PS00198">
    <property type="entry name" value="4FE4S_FER_1"/>
    <property type="match status" value="1"/>
</dbReference>
<dbReference type="PROSITE" id="PS51379">
    <property type="entry name" value="4FE4S_FER_2"/>
    <property type="match status" value="3"/>
</dbReference>
<dbReference type="PROSITE" id="PS51318">
    <property type="entry name" value="TAT"/>
    <property type="match status" value="1"/>
</dbReference>
<organism>
    <name type="scientific">Mesobacillus selenatarsenatis (strain DSM 18680 / JCM 14380 / FERM P-15431 / SF-1)</name>
    <dbReference type="NCBI Taxonomy" id="1321606"/>
    <lineage>
        <taxon>Bacteria</taxon>
        <taxon>Bacillati</taxon>
        <taxon>Bacillota</taxon>
        <taxon>Bacilli</taxon>
        <taxon>Bacillales</taxon>
        <taxon>Bacillaceae</taxon>
        <taxon>Mesobacillus</taxon>
    </lineage>
</organism>
<feature type="signal peptide" description="Tat-type signal" evidence="2">
    <location>
        <begin position="1"/>
        <end position="43"/>
    </location>
</feature>
<feature type="chain" id="PRO_0000461865" description="Selenate reductase subunit B" evidence="2">
    <location>
        <begin position="44"/>
        <end position="292"/>
    </location>
</feature>
<feature type="domain" description="4Fe-4S ferredoxin-type 1" evidence="3">
    <location>
        <begin position="84"/>
        <end position="113"/>
    </location>
</feature>
<feature type="domain" description="4Fe-4S ferredoxin-type 2" evidence="3">
    <location>
        <begin position="129"/>
        <end position="160"/>
    </location>
</feature>
<feature type="domain" description="4Fe-4S ferredoxin-type 3" evidence="3">
    <location>
        <begin position="161"/>
        <end position="190"/>
    </location>
</feature>
<feature type="binding site" evidence="1">
    <location>
        <position position="93"/>
    </location>
    <ligand>
        <name>[4Fe-4S] cluster</name>
        <dbReference type="ChEBI" id="CHEBI:49883"/>
        <label>1</label>
    </ligand>
</feature>
<feature type="binding site" evidence="1">
    <location>
        <position position="96"/>
    </location>
    <ligand>
        <name>[4Fe-4S] cluster</name>
        <dbReference type="ChEBI" id="CHEBI:49883"/>
        <label>1</label>
    </ligand>
</feature>
<feature type="binding site" evidence="1">
    <location>
        <position position="99"/>
    </location>
    <ligand>
        <name>[4Fe-4S] cluster</name>
        <dbReference type="ChEBI" id="CHEBI:49883"/>
        <label>1</label>
    </ligand>
</feature>
<feature type="binding site" evidence="1">
    <location>
        <position position="103"/>
    </location>
    <ligand>
        <name>[4Fe-4S] cluster</name>
        <dbReference type="ChEBI" id="CHEBI:49883"/>
        <label>2</label>
    </ligand>
</feature>
<feature type="binding site" evidence="1">
    <location>
        <position position="138"/>
    </location>
    <ligand>
        <name>[4Fe-4S] cluster</name>
        <dbReference type="ChEBI" id="CHEBI:49883"/>
        <label>3</label>
    </ligand>
</feature>
<feature type="binding site" evidence="1">
    <location>
        <position position="141"/>
    </location>
    <ligand>
        <name>[4Fe-4S] cluster</name>
        <dbReference type="ChEBI" id="CHEBI:49883"/>
        <label>3</label>
    </ligand>
</feature>
<feature type="binding site" evidence="1">
    <location>
        <position position="146"/>
    </location>
    <ligand>
        <name>[4Fe-4S] cluster</name>
        <dbReference type="ChEBI" id="CHEBI:49883"/>
        <label>3</label>
    </ligand>
</feature>
<feature type="binding site" evidence="1">
    <location>
        <position position="150"/>
    </location>
    <ligand>
        <name>[4Fe-4S] cluster</name>
        <dbReference type="ChEBI" id="CHEBI:49883"/>
        <label>4</label>
    </ligand>
</feature>
<feature type="binding site" evidence="1">
    <location>
        <position position="170"/>
    </location>
    <ligand>
        <name>[4Fe-4S] cluster</name>
        <dbReference type="ChEBI" id="CHEBI:49883"/>
        <label>4</label>
    </ligand>
</feature>
<feature type="binding site" evidence="1">
    <location>
        <position position="173"/>
    </location>
    <ligand>
        <name>[4Fe-4S] cluster</name>
        <dbReference type="ChEBI" id="CHEBI:49883"/>
        <label>4</label>
    </ligand>
</feature>
<feature type="binding site" evidence="1">
    <location>
        <position position="176"/>
    </location>
    <ligand>
        <name>[4Fe-4S] cluster</name>
        <dbReference type="ChEBI" id="CHEBI:49883"/>
        <label>4</label>
    </ligand>
</feature>
<feature type="binding site" evidence="1">
    <location>
        <position position="180"/>
    </location>
    <ligand>
        <name>[4Fe-4S] cluster</name>
        <dbReference type="ChEBI" id="CHEBI:49883"/>
        <label>3</label>
    </ligand>
</feature>
<feature type="binding site" evidence="1">
    <location>
        <position position="230"/>
    </location>
    <ligand>
        <name>[4Fe-4S] cluster</name>
        <dbReference type="ChEBI" id="CHEBI:49883"/>
        <label>2</label>
    </ligand>
</feature>
<feature type="binding site" evidence="1">
    <location>
        <position position="233"/>
    </location>
    <ligand>
        <name>[4Fe-4S] cluster</name>
        <dbReference type="ChEBI" id="CHEBI:49883"/>
        <label>2</label>
    </ligand>
</feature>
<feature type="binding site" evidence="1">
    <location>
        <position position="245"/>
    </location>
    <ligand>
        <name>[4Fe-4S] cluster</name>
        <dbReference type="ChEBI" id="CHEBI:49883"/>
        <label>2</label>
    </ligand>
</feature>
<feature type="binding site" evidence="1">
    <location>
        <position position="249"/>
    </location>
    <ligand>
        <name>[4Fe-4S] cluster</name>
        <dbReference type="ChEBI" id="CHEBI:49883"/>
        <label>1</label>
    </ligand>
</feature>
<protein>
    <recommendedName>
        <fullName evidence="6">Selenate reductase subunit B</fullName>
        <ecNumber evidence="7">1.97.1.14</ecNumber>
    </recommendedName>
    <alternativeName>
        <fullName evidence="6">Selenate reductase electron transport subunit</fullName>
    </alternativeName>
</protein>
<keyword id="KW-0004">4Fe-4S</keyword>
<keyword id="KW-0249">Electron transport</keyword>
<keyword id="KW-0408">Iron</keyword>
<keyword id="KW-0411">Iron-sulfur</keyword>
<keyword id="KW-0479">Metal-binding</keyword>
<keyword id="KW-0560">Oxidoreductase</keyword>
<keyword id="KW-1185">Reference proteome</keyword>
<keyword id="KW-0677">Repeat</keyword>
<keyword id="KW-0964">Secreted</keyword>
<keyword id="KW-0732">Signal</keyword>
<keyword id="KW-0813">Transport</keyword>
<comment type="function">
    <text evidence="4 7">Component of the respiratory selenate reductase complex, which catalyzes the reduction of selenate to selenite (PubMed:21357486). This subunit probably transfers electrons from SrdC to SrdA (Probable).</text>
</comment>
<comment type="catalytic activity">
    <reaction evidence="7">
        <text>selenite + a quinone + H2O = selenate + a quinol</text>
        <dbReference type="Rhea" id="RHEA:51636"/>
        <dbReference type="ChEBI" id="CHEBI:15075"/>
        <dbReference type="ChEBI" id="CHEBI:15377"/>
        <dbReference type="ChEBI" id="CHEBI:18212"/>
        <dbReference type="ChEBI" id="CHEBI:24646"/>
        <dbReference type="ChEBI" id="CHEBI:132124"/>
        <dbReference type="EC" id="1.97.1.14"/>
    </reaction>
</comment>
<comment type="cofactor">
    <cofactor evidence="1">
        <name>[4Fe-4S] cluster</name>
        <dbReference type="ChEBI" id="CHEBI:49883"/>
    </cofactor>
    <text evidence="1">Binds 4 [4Fe-4S] cluster.</text>
</comment>
<comment type="subunit">
    <text evidence="4">The complex is composed of three subunits: SrdA, SrdB and SrdC.</text>
</comment>
<comment type="subcellular location">
    <subcellularLocation>
        <location evidence="7">Secreted</location>
    </subcellularLocation>
    <text evidence="7">SrdA, SrdB and SrdC probably form a membrane-bound complex facing the extracytoplasmic side of the cell.</text>
</comment>
<comment type="PTM">
    <text evidence="2">Predicted to be exported by the Tat system. The position of the signal peptide cleavage has not been experimentally proven.</text>
</comment>
<accession>A0A0A8X5N4</accession>
<accession>E9RFC9</accession>
<evidence type="ECO:0000250" key="1">
    <source>
        <dbReference type="UniProtKB" id="Q7WTT9"/>
    </source>
</evidence>
<evidence type="ECO:0000255" key="2">
    <source>
        <dbReference type="PROSITE-ProRule" id="PRU00648"/>
    </source>
</evidence>
<evidence type="ECO:0000255" key="3">
    <source>
        <dbReference type="PROSITE-ProRule" id="PRU00711"/>
    </source>
</evidence>
<evidence type="ECO:0000269" key="4">
    <source>
    </source>
</evidence>
<evidence type="ECO:0000303" key="5">
    <source>
    </source>
</evidence>
<evidence type="ECO:0000305" key="6"/>
<evidence type="ECO:0000305" key="7">
    <source>
    </source>
</evidence>
<evidence type="ECO:0000312" key="8">
    <source>
        <dbReference type="EMBL" id="BAJ83592.1"/>
    </source>
</evidence>
<evidence type="ECO:0000312" key="9">
    <source>
        <dbReference type="EMBL" id="GAM13406.1"/>
    </source>
</evidence>
<sequence length="292" mass="32669">MGSKETKNTSRRDFLIKGAGAAALGAGAFAISQVPLLEKLASANEDTVKDLLPFPELIESDEIIIRMQNDVRRALKKPLNEIQWIMVIDLKKCVGCSSCTVACVSENVLPPGVVYRPVIEEEIGTFPNVTKKFTPRPCMQCEHPPCTKVCPIGATYKSEDGIVAIDYDKCIGCRYCITACPYGARTFDWGEYHTENTPEIMQYEKEPNYEYGVERVREKKNSPIGNARKCHFCKHRLHKGMLSMCVTTCIGRATYIGDKNDPESLVAELIASPRVMRLKEELGTEPNVYYLT</sequence>
<gene>
    <name evidence="5" type="primary">srdB</name>
    <name evidence="9" type="ORF">SAMD00020551_1550</name>
</gene>
<proteinExistence type="evidence at protein level"/>
<name>SRDB_MESS1</name>
<reference evidence="8" key="1">
    <citation type="journal article" date="2011" name="J. Bacteriol.">
        <title>Molecular cloning and characterization of the srdBCA operon, encoding the respiratory selenate reductase complex, from the selenate-reducing bacterium Bacillus selenatarsenatis SF-1.</title>
        <authorList>
            <person name="Kuroda M."/>
            <person name="Yamashita M."/>
            <person name="Miwa E."/>
            <person name="Imao K."/>
            <person name="Fujimoto N."/>
            <person name="Ono H."/>
            <person name="Nagano K."/>
            <person name="Sei K."/>
            <person name="Ike M."/>
        </authorList>
    </citation>
    <scope>NUCLEOTIDE SEQUENCE [GENOMIC DNA]</scope>
    <scope>FUNCTION AS A SELENATE REDUCTASE</scope>
    <scope>SUBUNIT</scope>
    <source>
        <strain>DSM 18680 / JCM 14380 / FERM P-15431 / SF-1</strain>
    </source>
</reference>
<reference evidence="9" key="2">
    <citation type="journal article" date="2015" name="Genome Announc.">
        <title>Draft Genome Sequence of Bacillus selenatarsenatis SF-1, a Promising Agent for Bioremediation of Environments Contaminated with Selenium and Arsenic.</title>
        <authorList>
            <person name="Kuroda M."/>
            <person name="Ayano H."/>
            <person name="Sei K."/>
            <person name="Yamashita M."/>
            <person name="Ike M."/>
        </authorList>
    </citation>
    <scope>NUCLEOTIDE SEQUENCE [LARGE SCALE GENOMIC DNA]</scope>
    <source>
        <strain>DSM 18680 / JCM 14380 / FERM P-15431 / SF-1</strain>
    </source>
</reference>